<organism>
    <name type="scientific">Saccharolobus islandicus (strain M.16.4 / Kamchatka #3)</name>
    <name type="common">Sulfolobus islandicus</name>
    <dbReference type="NCBI Taxonomy" id="426118"/>
    <lineage>
        <taxon>Archaea</taxon>
        <taxon>Thermoproteota</taxon>
        <taxon>Thermoprotei</taxon>
        <taxon>Sulfolobales</taxon>
        <taxon>Sulfolobaceae</taxon>
        <taxon>Saccharolobus</taxon>
    </lineage>
</organism>
<protein>
    <recommendedName>
        <fullName evidence="1">UPF0282 protein M164_2122</fullName>
    </recommendedName>
</protein>
<evidence type="ECO:0000255" key="1">
    <source>
        <dbReference type="HAMAP-Rule" id="MF_01406"/>
    </source>
</evidence>
<reference key="1">
    <citation type="journal article" date="2009" name="Proc. Natl. Acad. Sci. U.S.A.">
        <title>Biogeography of the Sulfolobus islandicus pan-genome.</title>
        <authorList>
            <person name="Reno M.L."/>
            <person name="Held N.L."/>
            <person name="Fields C.J."/>
            <person name="Burke P.V."/>
            <person name="Whitaker R.J."/>
        </authorList>
    </citation>
    <scope>NUCLEOTIDE SEQUENCE [LARGE SCALE GENOMIC DNA]</scope>
    <source>
        <strain>M.16.4 / Kamchatka #3</strain>
    </source>
</reference>
<sequence>MKITPIAFESLGVRSQATLIETKDLRVLVDPAISLAPRRYNLPPHQREVDRLTELAKVLVDVAKDVDVIIVSHYHYDHHDPGYVIPTDIYKNKLVFIKDPQNMINNSQKYRRAPRFLRSIKDKPSKIEIADGKTFEVGHTTISFSPAVPHGADERLGYVIQVAISDKDSTVIFTSDIEGAPKDVHLKFTKEKMPKTIIIDGPLSYLLGRVLKEEELEKSIRNMEEIVKNGLETVIIDHHVLRDINYAEVLKPVYDIAKDLGVRVTTAAEYLNLEPLILEARRKELFKEDNRPAKIPRGLANLLSAGEG</sequence>
<gene>
    <name type="ordered locus">M164_2122</name>
</gene>
<accession>C4KJT0</accession>
<dbReference type="EMBL" id="CP001402">
    <property type="protein sequence ID" value="ACR42725.1"/>
    <property type="molecule type" value="Genomic_DNA"/>
</dbReference>
<dbReference type="RefSeq" id="WP_012736104.1">
    <property type="nucleotide sequence ID" value="NC_012726.1"/>
</dbReference>
<dbReference type="GeneID" id="84062422"/>
<dbReference type="KEGG" id="sid:M164_2122"/>
<dbReference type="HOGENOM" id="CLU_079268_0_0_2"/>
<dbReference type="Proteomes" id="UP000001479">
    <property type="component" value="Chromosome"/>
</dbReference>
<dbReference type="Gene3D" id="3.60.15.10">
    <property type="entry name" value="Ribonuclease Z/Hydroxyacylglutathione hydrolase-like"/>
    <property type="match status" value="1"/>
</dbReference>
<dbReference type="HAMAP" id="MF_01406">
    <property type="entry name" value="UPF0282"/>
    <property type="match status" value="1"/>
</dbReference>
<dbReference type="InterPro" id="IPR001279">
    <property type="entry name" value="Metallo-B-lactamas"/>
</dbReference>
<dbReference type="InterPro" id="IPR036866">
    <property type="entry name" value="RibonucZ/Hydroxyglut_hydro"/>
</dbReference>
<dbReference type="InterPro" id="IPR050114">
    <property type="entry name" value="UPF0173_UPF0282_UlaG_hydrolase"/>
</dbReference>
<dbReference type="InterPro" id="IPR014426">
    <property type="entry name" value="UPF0282_hydrls"/>
</dbReference>
<dbReference type="NCBIfam" id="NF003287">
    <property type="entry name" value="PRK04286.1-1"/>
    <property type="match status" value="1"/>
</dbReference>
<dbReference type="PANTHER" id="PTHR43546">
    <property type="entry name" value="UPF0173 METAL-DEPENDENT HYDROLASE MJ1163-RELATED"/>
    <property type="match status" value="1"/>
</dbReference>
<dbReference type="PANTHER" id="PTHR43546:SF4">
    <property type="entry name" value="UPF0282 PROTEIN MJ1629"/>
    <property type="match status" value="1"/>
</dbReference>
<dbReference type="Pfam" id="PF12706">
    <property type="entry name" value="Lactamase_B_2"/>
    <property type="match status" value="1"/>
</dbReference>
<dbReference type="PIRSF" id="PIRSF004944">
    <property type="entry name" value="UCP004944_hydrls"/>
    <property type="match status" value="1"/>
</dbReference>
<dbReference type="SUPFAM" id="SSF56281">
    <property type="entry name" value="Metallo-hydrolase/oxidoreductase"/>
    <property type="match status" value="1"/>
</dbReference>
<comment type="similarity">
    <text evidence="1">Belongs to the UPF0282 family.</text>
</comment>
<proteinExistence type="inferred from homology"/>
<name>Y2122_SACI6</name>
<feature type="chain" id="PRO_1000215205" description="UPF0282 protein M164_2122">
    <location>
        <begin position="1"/>
        <end position="308"/>
    </location>
</feature>